<sequence length="137" mass="15457">MLQPNRRKFRKEHKGRNEGLATRGTKVSFGEWGLKAIGRGRLTARQIEAARRAMTRHIKRGGRIWIRIFPDKPISKKPAEVRMGNGKGNPEYWVAEIQPGKVLYEMDGVNEALAREAFALAAAKLPIPTTFVTRHLG</sequence>
<organism>
    <name type="scientific">Dechloromonas aromatica (strain RCB)</name>
    <dbReference type="NCBI Taxonomy" id="159087"/>
    <lineage>
        <taxon>Bacteria</taxon>
        <taxon>Pseudomonadati</taxon>
        <taxon>Pseudomonadota</taxon>
        <taxon>Betaproteobacteria</taxon>
        <taxon>Rhodocyclales</taxon>
        <taxon>Azonexaceae</taxon>
        <taxon>Dechloromonas</taxon>
    </lineage>
</organism>
<protein>
    <recommendedName>
        <fullName evidence="1">Large ribosomal subunit protein uL16</fullName>
    </recommendedName>
    <alternativeName>
        <fullName evidence="3">50S ribosomal protein L16</fullName>
    </alternativeName>
</protein>
<comment type="function">
    <text evidence="1">Binds 23S rRNA and is also seen to make contacts with the A and possibly P site tRNAs.</text>
</comment>
<comment type="subunit">
    <text evidence="1">Part of the 50S ribosomal subunit.</text>
</comment>
<comment type="similarity">
    <text evidence="1">Belongs to the universal ribosomal protein uL16 family.</text>
</comment>
<name>RL16_DECAR</name>
<reference key="1">
    <citation type="journal article" date="2009" name="BMC Genomics">
        <title>Metabolic analysis of the soil microbe Dechloromonas aromatica str. RCB: indications of a surprisingly complex life-style and cryptic anaerobic pathways for aromatic degradation.</title>
        <authorList>
            <person name="Salinero K.K."/>
            <person name="Keller K."/>
            <person name="Feil W.S."/>
            <person name="Feil H."/>
            <person name="Trong S."/>
            <person name="Di Bartolo G."/>
            <person name="Lapidus A."/>
        </authorList>
    </citation>
    <scope>NUCLEOTIDE SEQUENCE [LARGE SCALE GENOMIC DNA]</scope>
    <source>
        <strain>RCB</strain>
    </source>
</reference>
<dbReference type="EMBL" id="CP000089">
    <property type="protein sequence ID" value="AAZ45085.1"/>
    <property type="molecule type" value="Genomic_DNA"/>
</dbReference>
<dbReference type="SMR" id="Q47J96"/>
<dbReference type="STRING" id="159087.Daro_0326"/>
<dbReference type="KEGG" id="dar:Daro_0326"/>
<dbReference type="eggNOG" id="COG0197">
    <property type="taxonomic scope" value="Bacteria"/>
</dbReference>
<dbReference type="HOGENOM" id="CLU_078858_2_1_4"/>
<dbReference type="OrthoDB" id="9802589at2"/>
<dbReference type="GO" id="GO:0022625">
    <property type="term" value="C:cytosolic large ribosomal subunit"/>
    <property type="evidence" value="ECO:0007669"/>
    <property type="project" value="TreeGrafter"/>
</dbReference>
<dbReference type="GO" id="GO:0019843">
    <property type="term" value="F:rRNA binding"/>
    <property type="evidence" value="ECO:0007669"/>
    <property type="project" value="UniProtKB-UniRule"/>
</dbReference>
<dbReference type="GO" id="GO:0003735">
    <property type="term" value="F:structural constituent of ribosome"/>
    <property type="evidence" value="ECO:0007669"/>
    <property type="project" value="InterPro"/>
</dbReference>
<dbReference type="GO" id="GO:0000049">
    <property type="term" value="F:tRNA binding"/>
    <property type="evidence" value="ECO:0007669"/>
    <property type="project" value="UniProtKB-KW"/>
</dbReference>
<dbReference type="GO" id="GO:0006412">
    <property type="term" value="P:translation"/>
    <property type="evidence" value="ECO:0007669"/>
    <property type="project" value="UniProtKB-UniRule"/>
</dbReference>
<dbReference type="CDD" id="cd01433">
    <property type="entry name" value="Ribosomal_L16_L10e"/>
    <property type="match status" value="1"/>
</dbReference>
<dbReference type="FunFam" id="3.90.1170.10:FF:000001">
    <property type="entry name" value="50S ribosomal protein L16"/>
    <property type="match status" value="1"/>
</dbReference>
<dbReference type="Gene3D" id="3.90.1170.10">
    <property type="entry name" value="Ribosomal protein L10e/L16"/>
    <property type="match status" value="1"/>
</dbReference>
<dbReference type="HAMAP" id="MF_01342">
    <property type="entry name" value="Ribosomal_uL16"/>
    <property type="match status" value="1"/>
</dbReference>
<dbReference type="InterPro" id="IPR047873">
    <property type="entry name" value="Ribosomal_uL16"/>
</dbReference>
<dbReference type="InterPro" id="IPR000114">
    <property type="entry name" value="Ribosomal_uL16_bact-type"/>
</dbReference>
<dbReference type="InterPro" id="IPR020798">
    <property type="entry name" value="Ribosomal_uL16_CS"/>
</dbReference>
<dbReference type="InterPro" id="IPR016180">
    <property type="entry name" value="Ribosomal_uL16_dom"/>
</dbReference>
<dbReference type="InterPro" id="IPR036920">
    <property type="entry name" value="Ribosomal_uL16_sf"/>
</dbReference>
<dbReference type="NCBIfam" id="TIGR01164">
    <property type="entry name" value="rplP_bact"/>
    <property type="match status" value="1"/>
</dbReference>
<dbReference type="PANTHER" id="PTHR12220">
    <property type="entry name" value="50S/60S RIBOSOMAL PROTEIN L16"/>
    <property type="match status" value="1"/>
</dbReference>
<dbReference type="PANTHER" id="PTHR12220:SF13">
    <property type="entry name" value="LARGE RIBOSOMAL SUBUNIT PROTEIN UL16M"/>
    <property type="match status" value="1"/>
</dbReference>
<dbReference type="Pfam" id="PF00252">
    <property type="entry name" value="Ribosomal_L16"/>
    <property type="match status" value="1"/>
</dbReference>
<dbReference type="PRINTS" id="PR00060">
    <property type="entry name" value="RIBOSOMALL16"/>
</dbReference>
<dbReference type="SUPFAM" id="SSF54686">
    <property type="entry name" value="Ribosomal protein L16p/L10e"/>
    <property type="match status" value="1"/>
</dbReference>
<dbReference type="PROSITE" id="PS00586">
    <property type="entry name" value="RIBOSOMAL_L16_1"/>
    <property type="match status" value="1"/>
</dbReference>
<dbReference type="PROSITE" id="PS00701">
    <property type="entry name" value="RIBOSOMAL_L16_2"/>
    <property type="match status" value="1"/>
</dbReference>
<evidence type="ECO:0000255" key="1">
    <source>
        <dbReference type="HAMAP-Rule" id="MF_01342"/>
    </source>
</evidence>
<evidence type="ECO:0000256" key="2">
    <source>
        <dbReference type="SAM" id="MobiDB-lite"/>
    </source>
</evidence>
<evidence type="ECO:0000305" key="3"/>
<accession>Q47J96</accession>
<feature type="chain" id="PRO_0000062090" description="Large ribosomal subunit protein uL16">
    <location>
        <begin position="1"/>
        <end position="137"/>
    </location>
</feature>
<feature type="region of interest" description="Disordered" evidence="2">
    <location>
        <begin position="1"/>
        <end position="22"/>
    </location>
</feature>
<feature type="compositionally biased region" description="Basic residues" evidence="2">
    <location>
        <begin position="1"/>
        <end position="14"/>
    </location>
</feature>
<keyword id="KW-0687">Ribonucleoprotein</keyword>
<keyword id="KW-0689">Ribosomal protein</keyword>
<keyword id="KW-0694">RNA-binding</keyword>
<keyword id="KW-0699">rRNA-binding</keyword>
<keyword id="KW-0820">tRNA-binding</keyword>
<proteinExistence type="inferred from homology"/>
<gene>
    <name evidence="1" type="primary">rplP</name>
    <name type="ordered locus">Daro_0326</name>
</gene>